<name>MRAZ_RICFE</name>
<comment type="subunit">
    <text evidence="1">Forms oligomers.</text>
</comment>
<comment type="subcellular location">
    <subcellularLocation>
        <location evidence="1">Cytoplasm</location>
        <location evidence="1">Nucleoid</location>
    </subcellularLocation>
</comment>
<comment type="similarity">
    <text evidence="1">Belongs to the MraZ family.</text>
</comment>
<keyword id="KW-0963">Cytoplasm</keyword>
<keyword id="KW-0238">DNA-binding</keyword>
<keyword id="KW-0677">Repeat</keyword>
<keyword id="KW-0804">Transcription</keyword>
<keyword id="KW-0805">Transcription regulation</keyword>
<gene>
    <name evidence="1" type="primary">mraZ</name>
    <name type="ordered locus">RF_0905</name>
</gene>
<reference key="1">
    <citation type="journal article" date="2005" name="PLoS Biol.">
        <title>The genome sequence of Rickettsia felis identifies the first putative conjugative plasmid in an obligate intracellular parasite.</title>
        <authorList>
            <person name="Ogata H."/>
            <person name="Renesto P."/>
            <person name="Audic S."/>
            <person name="Robert C."/>
            <person name="Blanc G."/>
            <person name="Fournier P.-E."/>
            <person name="Parinello H."/>
            <person name="Claverie J.-M."/>
            <person name="Raoult D."/>
        </authorList>
    </citation>
    <scope>NUCLEOTIDE SEQUENCE [LARGE SCALE GENOMIC DNA]</scope>
    <source>
        <strain>ATCC VR-1525 / URRWXCal2</strain>
    </source>
</reference>
<accession>Q4UL17</accession>
<feature type="chain" id="PRO_0000230107" description="Transcriptional regulator MraZ">
    <location>
        <begin position="1"/>
        <end position="149"/>
    </location>
</feature>
<feature type="domain" description="SpoVT-AbrB 1" evidence="2">
    <location>
        <begin position="7"/>
        <end position="54"/>
    </location>
</feature>
<feature type="domain" description="SpoVT-AbrB 2" evidence="2">
    <location>
        <begin position="83"/>
        <end position="126"/>
    </location>
</feature>
<protein>
    <recommendedName>
        <fullName>Transcriptional regulator MraZ</fullName>
    </recommendedName>
</protein>
<dbReference type="EMBL" id="CP000053">
    <property type="protein sequence ID" value="AAY61756.1"/>
    <property type="molecule type" value="Genomic_DNA"/>
</dbReference>
<dbReference type="SMR" id="Q4UL17"/>
<dbReference type="STRING" id="315456.RF_0905"/>
<dbReference type="KEGG" id="rfe:RF_0905"/>
<dbReference type="eggNOG" id="COG2001">
    <property type="taxonomic scope" value="Bacteria"/>
</dbReference>
<dbReference type="HOGENOM" id="CLU_107907_1_0_5"/>
<dbReference type="OrthoDB" id="9807753at2"/>
<dbReference type="Proteomes" id="UP000008548">
    <property type="component" value="Chromosome"/>
</dbReference>
<dbReference type="GO" id="GO:0005737">
    <property type="term" value="C:cytoplasm"/>
    <property type="evidence" value="ECO:0007669"/>
    <property type="project" value="UniProtKB-UniRule"/>
</dbReference>
<dbReference type="GO" id="GO:0009295">
    <property type="term" value="C:nucleoid"/>
    <property type="evidence" value="ECO:0007669"/>
    <property type="project" value="UniProtKB-SubCell"/>
</dbReference>
<dbReference type="GO" id="GO:0003700">
    <property type="term" value="F:DNA-binding transcription factor activity"/>
    <property type="evidence" value="ECO:0007669"/>
    <property type="project" value="UniProtKB-UniRule"/>
</dbReference>
<dbReference type="GO" id="GO:0000976">
    <property type="term" value="F:transcription cis-regulatory region binding"/>
    <property type="evidence" value="ECO:0007669"/>
    <property type="project" value="TreeGrafter"/>
</dbReference>
<dbReference type="GO" id="GO:2000143">
    <property type="term" value="P:negative regulation of DNA-templated transcription initiation"/>
    <property type="evidence" value="ECO:0007669"/>
    <property type="project" value="TreeGrafter"/>
</dbReference>
<dbReference type="CDD" id="cd16321">
    <property type="entry name" value="MraZ_C"/>
    <property type="match status" value="1"/>
</dbReference>
<dbReference type="CDD" id="cd16320">
    <property type="entry name" value="MraZ_N"/>
    <property type="match status" value="1"/>
</dbReference>
<dbReference type="Gene3D" id="3.40.1550.20">
    <property type="entry name" value="Transcriptional regulator MraZ domain"/>
    <property type="match status" value="1"/>
</dbReference>
<dbReference type="HAMAP" id="MF_01008">
    <property type="entry name" value="MraZ"/>
    <property type="match status" value="1"/>
</dbReference>
<dbReference type="InterPro" id="IPR003444">
    <property type="entry name" value="MraZ"/>
</dbReference>
<dbReference type="InterPro" id="IPR035644">
    <property type="entry name" value="MraZ_C"/>
</dbReference>
<dbReference type="InterPro" id="IPR020603">
    <property type="entry name" value="MraZ_dom"/>
</dbReference>
<dbReference type="InterPro" id="IPR035642">
    <property type="entry name" value="MraZ_N"/>
</dbReference>
<dbReference type="InterPro" id="IPR038619">
    <property type="entry name" value="MraZ_sf"/>
</dbReference>
<dbReference type="InterPro" id="IPR007159">
    <property type="entry name" value="SpoVT-AbrB_dom"/>
</dbReference>
<dbReference type="InterPro" id="IPR037914">
    <property type="entry name" value="SpoVT-AbrB_sf"/>
</dbReference>
<dbReference type="NCBIfam" id="NF001475">
    <property type="entry name" value="PRK00326.2-1"/>
    <property type="match status" value="1"/>
</dbReference>
<dbReference type="PANTHER" id="PTHR34701">
    <property type="entry name" value="TRANSCRIPTIONAL REGULATOR MRAZ"/>
    <property type="match status" value="1"/>
</dbReference>
<dbReference type="PANTHER" id="PTHR34701:SF1">
    <property type="entry name" value="TRANSCRIPTIONAL REGULATOR MRAZ"/>
    <property type="match status" value="1"/>
</dbReference>
<dbReference type="Pfam" id="PF02381">
    <property type="entry name" value="MraZ"/>
    <property type="match status" value="1"/>
</dbReference>
<dbReference type="SUPFAM" id="SSF89447">
    <property type="entry name" value="AbrB/MazE/MraZ-like"/>
    <property type="match status" value="1"/>
</dbReference>
<dbReference type="PROSITE" id="PS51740">
    <property type="entry name" value="SPOVT_ABRB"/>
    <property type="match status" value="2"/>
</dbReference>
<proteinExistence type="inferred from homology"/>
<sequence>MNVFLSKYVNGVDKKSRVSVPANYRAVLGKELFNGVIAYPSIRNDCIEVCGISHIEKLRQMIETLDPYSEERDAFETMIFGEAVQLSFDGEGRVILPQSLMKHAGIEEQACFVGKGVIFEIWQPQNFEKYLNSAQKIAHEKRLTLRNAN</sequence>
<evidence type="ECO:0000255" key="1">
    <source>
        <dbReference type="HAMAP-Rule" id="MF_01008"/>
    </source>
</evidence>
<evidence type="ECO:0000255" key="2">
    <source>
        <dbReference type="PROSITE-ProRule" id="PRU01076"/>
    </source>
</evidence>
<organism>
    <name type="scientific">Rickettsia felis (strain ATCC VR-1525 / URRWXCal2)</name>
    <name type="common">Rickettsia azadi</name>
    <dbReference type="NCBI Taxonomy" id="315456"/>
    <lineage>
        <taxon>Bacteria</taxon>
        <taxon>Pseudomonadati</taxon>
        <taxon>Pseudomonadota</taxon>
        <taxon>Alphaproteobacteria</taxon>
        <taxon>Rickettsiales</taxon>
        <taxon>Rickettsiaceae</taxon>
        <taxon>Rickettsieae</taxon>
        <taxon>Rickettsia</taxon>
        <taxon>spotted fever group</taxon>
    </lineage>
</organism>